<accession>Q602M9</accession>
<evidence type="ECO:0000255" key="1">
    <source>
        <dbReference type="HAMAP-Rule" id="MF_00391"/>
    </source>
</evidence>
<evidence type="ECO:0000256" key="2">
    <source>
        <dbReference type="SAM" id="MobiDB-lite"/>
    </source>
</evidence>
<evidence type="ECO:0000305" key="3"/>
<feature type="chain" id="PRO_0000187408" description="Large ribosomal subunit protein bL34">
    <location>
        <begin position="1"/>
        <end position="44"/>
    </location>
</feature>
<feature type="region of interest" description="Disordered" evidence="2">
    <location>
        <begin position="22"/>
        <end position="44"/>
    </location>
</feature>
<feature type="compositionally biased region" description="Basic residues" evidence="2">
    <location>
        <begin position="34"/>
        <end position="44"/>
    </location>
</feature>
<name>RL34_METCA</name>
<proteinExistence type="inferred from homology"/>
<keyword id="KW-1185">Reference proteome</keyword>
<keyword id="KW-0687">Ribonucleoprotein</keyword>
<keyword id="KW-0689">Ribosomal protein</keyword>
<protein>
    <recommendedName>
        <fullName evidence="1">Large ribosomal subunit protein bL34</fullName>
    </recommendedName>
    <alternativeName>
        <fullName evidence="3">50S ribosomal protein L34</fullName>
    </alternativeName>
</protein>
<sequence length="44" mass="5154">MKRTYQPSKIKRVRTHGFRARMKTRGGRAVLSARRAKGRRKLSV</sequence>
<gene>
    <name evidence="1" type="primary">rpmH</name>
    <name type="ordered locus">MCA3034</name>
</gene>
<dbReference type="EMBL" id="AE017282">
    <property type="protein sequence ID" value="AAU90914.1"/>
    <property type="molecule type" value="Genomic_DNA"/>
</dbReference>
<dbReference type="RefSeq" id="WP_010962222.1">
    <property type="nucleotide sequence ID" value="NC_002977.6"/>
</dbReference>
<dbReference type="SMR" id="Q602M9"/>
<dbReference type="STRING" id="243233.MCA3034"/>
<dbReference type="GeneID" id="88225196"/>
<dbReference type="KEGG" id="mca:MCA3034"/>
<dbReference type="eggNOG" id="COG0230">
    <property type="taxonomic scope" value="Bacteria"/>
</dbReference>
<dbReference type="HOGENOM" id="CLU_129938_2_0_6"/>
<dbReference type="Proteomes" id="UP000006821">
    <property type="component" value="Chromosome"/>
</dbReference>
<dbReference type="GO" id="GO:1990904">
    <property type="term" value="C:ribonucleoprotein complex"/>
    <property type="evidence" value="ECO:0007669"/>
    <property type="project" value="UniProtKB-KW"/>
</dbReference>
<dbReference type="GO" id="GO:0005840">
    <property type="term" value="C:ribosome"/>
    <property type="evidence" value="ECO:0007669"/>
    <property type="project" value="UniProtKB-KW"/>
</dbReference>
<dbReference type="GO" id="GO:0003735">
    <property type="term" value="F:structural constituent of ribosome"/>
    <property type="evidence" value="ECO:0007669"/>
    <property type="project" value="InterPro"/>
</dbReference>
<dbReference type="GO" id="GO:0006412">
    <property type="term" value="P:translation"/>
    <property type="evidence" value="ECO:0007669"/>
    <property type="project" value="UniProtKB-UniRule"/>
</dbReference>
<dbReference type="FunFam" id="1.10.287.3980:FF:000001">
    <property type="entry name" value="Mitochondrial ribosomal protein L34"/>
    <property type="match status" value="1"/>
</dbReference>
<dbReference type="Gene3D" id="1.10.287.3980">
    <property type="match status" value="1"/>
</dbReference>
<dbReference type="HAMAP" id="MF_00391">
    <property type="entry name" value="Ribosomal_bL34"/>
    <property type="match status" value="1"/>
</dbReference>
<dbReference type="InterPro" id="IPR000271">
    <property type="entry name" value="Ribosomal_bL34"/>
</dbReference>
<dbReference type="InterPro" id="IPR020939">
    <property type="entry name" value="Ribosomal_bL34_CS"/>
</dbReference>
<dbReference type="NCBIfam" id="TIGR01030">
    <property type="entry name" value="rpmH_bact"/>
    <property type="match status" value="1"/>
</dbReference>
<dbReference type="PANTHER" id="PTHR14503:SF4">
    <property type="entry name" value="LARGE RIBOSOMAL SUBUNIT PROTEIN BL34M"/>
    <property type="match status" value="1"/>
</dbReference>
<dbReference type="PANTHER" id="PTHR14503">
    <property type="entry name" value="MITOCHONDRIAL RIBOSOMAL PROTEIN 34 FAMILY MEMBER"/>
    <property type="match status" value="1"/>
</dbReference>
<dbReference type="Pfam" id="PF00468">
    <property type="entry name" value="Ribosomal_L34"/>
    <property type="match status" value="1"/>
</dbReference>
<dbReference type="PROSITE" id="PS00784">
    <property type="entry name" value="RIBOSOMAL_L34"/>
    <property type="match status" value="1"/>
</dbReference>
<organism>
    <name type="scientific">Methylococcus capsulatus (strain ATCC 33009 / NCIMB 11132 / Bath)</name>
    <dbReference type="NCBI Taxonomy" id="243233"/>
    <lineage>
        <taxon>Bacteria</taxon>
        <taxon>Pseudomonadati</taxon>
        <taxon>Pseudomonadota</taxon>
        <taxon>Gammaproteobacteria</taxon>
        <taxon>Methylococcales</taxon>
        <taxon>Methylococcaceae</taxon>
        <taxon>Methylococcus</taxon>
    </lineage>
</organism>
<reference key="1">
    <citation type="journal article" date="2004" name="PLoS Biol.">
        <title>Genomic insights into methanotrophy: the complete genome sequence of Methylococcus capsulatus (Bath).</title>
        <authorList>
            <person name="Ward N.L."/>
            <person name="Larsen O."/>
            <person name="Sakwa J."/>
            <person name="Bruseth L."/>
            <person name="Khouri H.M."/>
            <person name="Durkin A.S."/>
            <person name="Dimitrov G."/>
            <person name="Jiang L."/>
            <person name="Scanlan D."/>
            <person name="Kang K.H."/>
            <person name="Lewis M.R."/>
            <person name="Nelson K.E."/>
            <person name="Methe B.A."/>
            <person name="Wu M."/>
            <person name="Heidelberg J.F."/>
            <person name="Paulsen I.T."/>
            <person name="Fouts D.E."/>
            <person name="Ravel J."/>
            <person name="Tettelin H."/>
            <person name="Ren Q."/>
            <person name="Read T.D."/>
            <person name="DeBoy R.T."/>
            <person name="Seshadri R."/>
            <person name="Salzberg S.L."/>
            <person name="Jensen H.B."/>
            <person name="Birkeland N.K."/>
            <person name="Nelson W.C."/>
            <person name="Dodson R.J."/>
            <person name="Grindhaug S.H."/>
            <person name="Holt I.E."/>
            <person name="Eidhammer I."/>
            <person name="Jonasen I."/>
            <person name="Vanaken S."/>
            <person name="Utterback T.R."/>
            <person name="Feldblyum T.V."/>
            <person name="Fraser C.M."/>
            <person name="Lillehaug J.R."/>
            <person name="Eisen J.A."/>
        </authorList>
    </citation>
    <scope>NUCLEOTIDE SEQUENCE [LARGE SCALE GENOMIC DNA]</scope>
    <source>
        <strain>ATCC 33009 / NCIMB 11132 / Bath</strain>
    </source>
</reference>
<comment type="similarity">
    <text evidence="1">Belongs to the bacterial ribosomal protein bL34 family.</text>
</comment>